<sequence length="74" mass="8543">MARPFFRRRKSCPFSGKNAPKIDYKDVRLLQGFMSERGKIVPSRITAVSAKKQRELSQAIKRARHIGLLPYIVK</sequence>
<organism>
    <name type="scientific">Novosphingobium aromaticivorans (strain ATCC 700278 / DSM 12444 / CCUG 56034 / CIP 105152 / NBRC 16084 / F199)</name>
    <dbReference type="NCBI Taxonomy" id="279238"/>
    <lineage>
        <taxon>Bacteria</taxon>
        <taxon>Pseudomonadati</taxon>
        <taxon>Pseudomonadota</taxon>
        <taxon>Alphaproteobacteria</taxon>
        <taxon>Sphingomonadales</taxon>
        <taxon>Sphingomonadaceae</taxon>
        <taxon>Novosphingobium</taxon>
    </lineage>
</organism>
<evidence type="ECO:0000255" key="1">
    <source>
        <dbReference type="HAMAP-Rule" id="MF_00270"/>
    </source>
</evidence>
<evidence type="ECO:0000305" key="2"/>
<name>RS18_NOVAD</name>
<keyword id="KW-1185">Reference proteome</keyword>
<keyword id="KW-0687">Ribonucleoprotein</keyword>
<keyword id="KW-0689">Ribosomal protein</keyword>
<keyword id="KW-0694">RNA-binding</keyword>
<keyword id="KW-0699">rRNA-binding</keyword>
<feature type="chain" id="PRO_0000345519" description="Small ribosomal subunit protein bS18">
    <location>
        <begin position="1"/>
        <end position="74"/>
    </location>
</feature>
<reference key="1">
    <citation type="submission" date="2006-01" db="EMBL/GenBank/DDBJ databases">
        <title>Complete sequence of Novosphingobium aromaticivorans DSM 12444.</title>
        <authorList>
            <consortium name="US DOE Joint Genome Institute"/>
            <person name="Copeland A."/>
            <person name="Lucas S."/>
            <person name="Lapidus A."/>
            <person name="Barry K."/>
            <person name="Detter J.C."/>
            <person name="Glavina T."/>
            <person name="Hammon N."/>
            <person name="Israni S."/>
            <person name="Pitluck S."/>
            <person name="Chain P."/>
            <person name="Malfatti S."/>
            <person name="Shin M."/>
            <person name="Vergez L."/>
            <person name="Schmutz J."/>
            <person name="Larimer F."/>
            <person name="Land M."/>
            <person name="Kyrpides N."/>
            <person name="Ivanova N."/>
            <person name="Fredrickson J."/>
            <person name="Balkwill D."/>
            <person name="Romine M.F."/>
            <person name="Richardson P."/>
        </authorList>
    </citation>
    <scope>NUCLEOTIDE SEQUENCE [LARGE SCALE GENOMIC DNA]</scope>
    <source>
        <strain>ATCC 700278 / DSM 12444 / CCUG 56034 / CIP 105152 / NBRC 16084 / F199</strain>
    </source>
</reference>
<dbReference type="EMBL" id="CP000248">
    <property type="protein sequence ID" value="ABD25859.1"/>
    <property type="molecule type" value="Genomic_DNA"/>
</dbReference>
<dbReference type="RefSeq" id="WP_011445073.1">
    <property type="nucleotide sequence ID" value="NC_007794.1"/>
</dbReference>
<dbReference type="SMR" id="Q2G8G4"/>
<dbReference type="STRING" id="279238.Saro_1415"/>
<dbReference type="KEGG" id="nar:Saro_1415"/>
<dbReference type="eggNOG" id="COG0238">
    <property type="taxonomic scope" value="Bacteria"/>
</dbReference>
<dbReference type="HOGENOM" id="CLU_148710_2_2_5"/>
<dbReference type="Proteomes" id="UP000009134">
    <property type="component" value="Chromosome"/>
</dbReference>
<dbReference type="GO" id="GO:0022627">
    <property type="term" value="C:cytosolic small ribosomal subunit"/>
    <property type="evidence" value="ECO:0007669"/>
    <property type="project" value="TreeGrafter"/>
</dbReference>
<dbReference type="GO" id="GO:0070181">
    <property type="term" value="F:small ribosomal subunit rRNA binding"/>
    <property type="evidence" value="ECO:0007669"/>
    <property type="project" value="TreeGrafter"/>
</dbReference>
<dbReference type="GO" id="GO:0003735">
    <property type="term" value="F:structural constituent of ribosome"/>
    <property type="evidence" value="ECO:0007669"/>
    <property type="project" value="InterPro"/>
</dbReference>
<dbReference type="GO" id="GO:0006412">
    <property type="term" value="P:translation"/>
    <property type="evidence" value="ECO:0007669"/>
    <property type="project" value="UniProtKB-UniRule"/>
</dbReference>
<dbReference type="Gene3D" id="4.10.640.10">
    <property type="entry name" value="Ribosomal protein S18"/>
    <property type="match status" value="1"/>
</dbReference>
<dbReference type="HAMAP" id="MF_00270">
    <property type="entry name" value="Ribosomal_bS18"/>
    <property type="match status" value="1"/>
</dbReference>
<dbReference type="InterPro" id="IPR001648">
    <property type="entry name" value="Ribosomal_bS18"/>
</dbReference>
<dbReference type="InterPro" id="IPR018275">
    <property type="entry name" value="Ribosomal_bS18_CS"/>
</dbReference>
<dbReference type="InterPro" id="IPR036870">
    <property type="entry name" value="Ribosomal_bS18_sf"/>
</dbReference>
<dbReference type="NCBIfam" id="TIGR00165">
    <property type="entry name" value="S18"/>
    <property type="match status" value="1"/>
</dbReference>
<dbReference type="PANTHER" id="PTHR13479">
    <property type="entry name" value="30S RIBOSOMAL PROTEIN S18"/>
    <property type="match status" value="1"/>
</dbReference>
<dbReference type="PANTHER" id="PTHR13479:SF40">
    <property type="entry name" value="SMALL RIBOSOMAL SUBUNIT PROTEIN BS18M"/>
    <property type="match status" value="1"/>
</dbReference>
<dbReference type="Pfam" id="PF01084">
    <property type="entry name" value="Ribosomal_S18"/>
    <property type="match status" value="1"/>
</dbReference>
<dbReference type="PRINTS" id="PR00974">
    <property type="entry name" value="RIBOSOMALS18"/>
</dbReference>
<dbReference type="SUPFAM" id="SSF46911">
    <property type="entry name" value="Ribosomal protein S18"/>
    <property type="match status" value="1"/>
</dbReference>
<dbReference type="PROSITE" id="PS00057">
    <property type="entry name" value="RIBOSOMAL_S18"/>
    <property type="match status" value="1"/>
</dbReference>
<accession>Q2G8G4</accession>
<gene>
    <name evidence="1" type="primary">rpsR</name>
    <name type="ordered locus">Saro_1415</name>
</gene>
<comment type="function">
    <text evidence="1">Binds as a heterodimer with protein bS6 to the central domain of the 16S rRNA, where it helps stabilize the platform of the 30S subunit.</text>
</comment>
<comment type="subunit">
    <text evidence="1">Part of the 30S ribosomal subunit. Forms a tight heterodimer with protein bS6.</text>
</comment>
<comment type="similarity">
    <text evidence="1">Belongs to the bacterial ribosomal protein bS18 family.</text>
</comment>
<proteinExistence type="inferred from homology"/>
<protein>
    <recommendedName>
        <fullName evidence="1">Small ribosomal subunit protein bS18</fullName>
    </recommendedName>
    <alternativeName>
        <fullName evidence="2">30S ribosomal protein S18</fullName>
    </alternativeName>
</protein>